<comment type="function">
    <text evidence="1">Catalyzes the phosphorylation of D-glycero-D-manno-heptose 7-phosphate at the C-1 position to selectively form D-glycero-beta-D-manno-heptose-1,7-bisphosphate.</text>
</comment>
<comment type="function">
    <text evidence="1">Catalyzes the ADP transfer from ATP to D-glycero-beta-D-manno-heptose 1-phosphate, yielding ADP-D-glycero-beta-D-manno-heptose.</text>
</comment>
<comment type="catalytic activity">
    <reaction evidence="1">
        <text>D-glycero-beta-D-manno-heptose 7-phosphate + ATP = D-glycero-beta-D-manno-heptose 1,7-bisphosphate + ADP + H(+)</text>
        <dbReference type="Rhea" id="RHEA:27473"/>
        <dbReference type="ChEBI" id="CHEBI:15378"/>
        <dbReference type="ChEBI" id="CHEBI:30616"/>
        <dbReference type="ChEBI" id="CHEBI:60204"/>
        <dbReference type="ChEBI" id="CHEBI:60208"/>
        <dbReference type="ChEBI" id="CHEBI:456216"/>
        <dbReference type="EC" id="2.7.1.167"/>
    </reaction>
</comment>
<comment type="catalytic activity">
    <reaction evidence="1">
        <text>D-glycero-beta-D-manno-heptose 1-phosphate + ATP + H(+) = ADP-D-glycero-beta-D-manno-heptose + diphosphate</text>
        <dbReference type="Rhea" id="RHEA:27465"/>
        <dbReference type="ChEBI" id="CHEBI:15378"/>
        <dbReference type="ChEBI" id="CHEBI:30616"/>
        <dbReference type="ChEBI" id="CHEBI:33019"/>
        <dbReference type="ChEBI" id="CHEBI:59967"/>
        <dbReference type="ChEBI" id="CHEBI:61593"/>
        <dbReference type="EC" id="2.7.7.70"/>
    </reaction>
</comment>
<comment type="pathway">
    <text evidence="1">Nucleotide-sugar biosynthesis; ADP-L-glycero-beta-D-manno-heptose biosynthesis; ADP-L-glycero-beta-D-manno-heptose from D-glycero-beta-D-manno-heptose 7-phosphate: step 1/4.</text>
</comment>
<comment type="pathway">
    <text evidence="1">Nucleotide-sugar biosynthesis; ADP-L-glycero-beta-D-manno-heptose biosynthesis; ADP-L-glycero-beta-D-manno-heptose from D-glycero-beta-D-manno-heptose 7-phosphate: step 3/4.</text>
</comment>
<comment type="subunit">
    <text evidence="1">Homodimer.</text>
</comment>
<comment type="similarity">
    <text evidence="1">In the N-terminal section; belongs to the carbohydrate kinase PfkB family.</text>
</comment>
<comment type="similarity">
    <text evidence="1">In the C-terminal section; belongs to the cytidylyltransferase family.</text>
</comment>
<gene>
    <name evidence="1" type="primary">hldE</name>
    <name type="ordered locus">Sputcn32_3069</name>
</gene>
<organism>
    <name type="scientific">Shewanella putrefaciens (strain CN-32 / ATCC BAA-453)</name>
    <dbReference type="NCBI Taxonomy" id="319224"/>
    <lineage>
        <taxon>Bacteria</taxon>
        <taxon>Pseudomonadati</taxon>
        <taxon>Pseudomonadota</taxon>
        <taxon>Gammaproteobacteria</taxon>
        <taxon>Alteromonadales</taxon>
        <taxon>Shewanellaceae</taxon>
        <taxon>Shewanella</taxon>
    </lineage>
</organism>
<keyword id="KW-0067">ATP-binding</keyword>
<keyword id="KW-0119">Carbohydrate metabolism</keyword>
<keyword id="KW-0418">Kinase</keyword>
<keyword id="KW-0511">Multifunctional enzyme</keyword>
<keyword id="KW-0547">Nucleotide-binding</keyword>
<keyword id="KW-0548">Nucleotidyltransferase</keyword>
<keyword id="KW-0808">Transferase</keyword>
<protein>
    <recommendedName>
        <fullName evidence="1">Bifunctional protein HldE</fullName>
    </recommendedName>
    <domain>
        <recommendedName>
            <fullName evidence="1">D-beta-D-heptose 7-phosphate kinase</fullName>
            <ecNumber evidence="1">2.7.1.167</ecNumber>
        </recommendedName>
        <alternativeName>
            <fullName evidence="1">D-beta-D-heptose 7-phosphotransferase</fullName>
        </alternativeName>
        <alternativeName>
            <fullName evidence="1">D-glycero-beta-D-manno-heptose-7-phosphate kinase</fullName>
        </alternativeName>
    </domain>
    <domain>
        <recommendedName>
            <fullName evidence="1">D-beta-D-heptose 1-phosphate adenylyltransferase</fullName>
            <ecNumber evidence="1">2.7.7.70</ecNumber>
        </recommendedName>
        <alternativeName>
            <fullName evidence="1">D-glycero-beta-D-manno-heptose 1-phosphate adenylyltransferase</fullName>
        </alternativeName>
    </domain>
</protein>
<name>HLDE_SHEPC</name>
<sequence>MKVSLPAFEKARVLVVGDVMLDRYWVGPTGRISPEAPVPVVKINQVEDRPGGAANVALNIATLGGQVQLAGLVGQDDTAVALTLGVQTLGVEPQWLSIADKPTITKLRVLSRNQQLIRLDFEEAFDKADSVRLLKQSEALLDSVDVVVLSDYAKGAIDQPRDFIALARSKGVMVLVDPKGSDFGRYHGASLITPNMSEFEAVVGTVTSEADLLEKARGLLKEHHFDAILVTRSEKGMTLVTANAPELHIPTVAREVYDVTGAGDTVISALATSLAAGADLPQACAIANTAAGVVVGKLGTSTVSRIELIEALALHHGESGFGVVSEDQLAYALEQAKLRGERVVMTNGCFDILHAGHVSYLKQAKALGDRLIVAVNDDASVKRLKGEGRPVNQVDRRMAVLAGLASVDWVVPFSEDTPQRIIARLLPDLLVKGGDYKIEDIAGGAEVIAAGGQVQVLGFEDGISTTAIIQNIMANQ</sequence>
<dbReference type="EC" id="2.7.1.167" evidence="1"/>
<dbReference type="EC" id="2.7.7.70" evidence="1"/>
<dbReference type="EMBL" id="CP000681">
    <property type="protein sequence ID" value="ABP76782.1"/>
    <property type="molecule type" value="Genomic_DNA"/>
</dbReference>
<dbReference type="SMR" id="A4Y9Z9"/>
<dbReference type="STRING" id="319224.Sputcn32_3069"/>
<dbReference type="KEGG" id="spc:Sputcn32_3069"/>
<dbReference type="eggNOG" id="COG0615">
    <property type="taxonomic scope" value="Bacteria"/>
</dbReference>
<dbReference type="eggNOG" id="COG2870">
    <property type="taxonomic scope" value="Bacteria"/>
</dbReference>
<dbReference type="HOGENOM" id="CLU_021150_2_1_6"/>
<dbReference type="UniPathway" id="UPA00356">
    <property type="reaction ID" value="UER00437"/>
</dbReference>
<dbReference type="UniPathway" id="UPA00356">
    <property type="reaction ID" value="UER00439"/>
</dbReference>
<dbReference type="GO" id="GO:0005829">
    <property type="term" value="C:cytosol"/>
    <property type="evidence" value="ECO:0007669"/>
    <property type="project" value="TreeGrafter"/>
</dbReference>
<dbReference type="GO" id="GO:0005524">
    <property type="term" value="F:ATP binding"/>
    <property type="evidence" value="ECO:0007669"/>
    <property type="project" value="UniProtKB-UniRule"/>
</dbReference>
<dbReference type="GO" id="GO:0033785">
    <property type="term" value="F:heptose 7-phosphate kinase activity"/>
    <property type="evidence" value="ECO:0007669"/>
    <property type="project" value="UniProtKB-UniRule"/>
</dbReference>
<dbReference type="GO" id="GO:0033786">
    <property type="term" value="F:heptose-1-phosphate adenylyltransferase activity"/>
    <property type="evidence" value="ECO:0007669"/>
    <property type="project" value="UniProtKB-UniRule"/>
</dbReference>
<dbReference type="GO" id="GO:0016773">
    <property type="term" value="F:phosphotransferase activity, alcohol group as acceptor"/>
    <property type="evidence" value="ECO:0007669"/>
    <property type="project" value="InterPro"/>
</dbReference>
<dbReference type="GO" id="GO:0097171">
    <property type="term" value="P:ADP-L-glycero-beta-D-manno-heptose biosynthetic process"/>
    <property type="evidence" value="ECO:0007669"/>
    <property type="project" value="UniProtKB-UniPathway"/>
</dbReference>
<dbReference type="CDD" id="cd01172">
    <property type="entry name" value="RfaE_like"/>
    <property type="match status" value="1"/>
</dbReference>
<dbReference type="FunFam" id="3.40.1190.20:FF:000002">
    <property type="entry name" value="Bifunctional protein HldE"/>
    <property type="match status" value="1"/>
</dbReference>
<dbReference type="FunFam" id="3.40.50.620:FF:000028">
    <property type="entry name" value="Bifunctional protein HldE"/>
    <property type="match status" value="1"/>
</dbReference>
<dbReference type="Gene3D" id="3.40.1190.20">
    <property type="match status" value="1"/>
</dbReference>
<dbReference type="Gene3D" id="3.40.50.620">
    <property type="entry name" value="HUPs"/>
    <property type="match status" value="1"/>
</dbReference>
<dbReference type="HAMAP" id="MF_01603">
    <property type="entry name" value="HldE"/>
    <property type="match status" value="1"/>
</dbReference>
<dbReference type="InterPro" id="IPR023030">
    <property type="entry name" value="Bifunc_HldE"/>
</dbReference>
<dbReference type="InterPro" id="IPR002173">
    <property type="entry name" value="Carboh/pur_kinase_PfkB_CS"/>
</dbReference>
<dbReference type="InterPro" id="IPR004821">
    <property type="entry name" value="Cyt_trans-like"/>
</dbReference>
<dbReference type="InterPro" id="IPR011611">
    <property type="entry name" value="PfkB_dom"/>
</dbReference>
<dbReference type="InterPro" id="IPR011913">
    <property type="entry name" value="RfaE_dom_I"/>
</dbReference>
<dbReference type="InterPro" id="IPR011914">
    <property type="entry name" value="RfaE_dom_II"/>
</dbReference>
<dbReference type="InterPro" id="IPR029056">
    <property type="entry name" value="Ribokinase-like"/>
</dbReference>
<dbReference type="InterPro" id="IPR014729">
    <property type="entry name" value="Rossmann-like_a/b/a_fold"/>
</dbReference>
<dbReference type="NCBIfam" id="TIGR00125">
    <property type="entry name" value="cyt_tran_rel"/>
    <property type="match status" value="1"/>
</dbReference>
<dbReference type="NCBIfam" id="NF008454">
    <property type="entry name" value="PRK11316.1"/>
    <property type="match status" value="1"/>
</dbReference>
<dbReference type="NCBIfam" id="TIGR02198">
    <property type="entry name" value="rfaE_dom_I"/>
    <property type="match status" value="1"/>
</dbReference>
<dbReference type="NCBIfam" id="TIGR02199">
    <property type="entry name" value="rfaE_dom_II"/>
    <property type="match status" value="1"/>
</dbReference>
<dbReference type="PANTHER" id="PTHR46969">
    <property type="entry name" value="BIFUNCTIONAL PROTEIN HLDE"/>
    <property type="match status" value="1"/>
</dbReference>
<dbReference type="PANTHER" id="PTHR46969:SF1">
    <property type="entry name" value="BIFUNCTIONAL PROTEIN HLDE"/>
    <property type="match status" value="1"/>
</dbReference>
<dbReference type="Pfam" id="PF01467">
    <property type="entry name" value="CTP_transf_like"/>
    <property type="match status" value="1"/>
</dbReference>
<dbReference type="Pfam" id="PF00294">
    <property type="entry name" value="PfkB"/>
    <property type="match status" value="1"/>
</dbReference>
<dbReference type="SUPFAM" id="SSF52374">
    <property type="entry name" value="Nucleotidylyl transferase"/>
    <property type="match status" value="1"/>
</dbReference>
<dbReference type="SUPFAM" id="SSF53613">
    <property type="entry name" value="Ribokinase-like"/>
    <property type="match status" value="1"/>
</dbReference>
<dbReference type="PROSITE" id="PS00583">
    <property type="entry name" value="PFKB_KINASES_1"/>
    <property type="match status" value="1"/>
</dbReference>
<dbReference type="PROSITE" id="PS00584">
    <property type="entry name" value="PFKB_KINASES_2"/>
    <property type="match status" value="1"/>
</dbReference>
<feature type="chain" id="PRO_1000069405" description="Bifunctional protein HldE">
    <location>
        <begin position="1"/>
        <end position="476"/>
    </location>
</feature>
<feature type="region of interest" description="Ribokinase">
    <location>
        <begin position="1"/>
        <end position="319"/>
    </location>
</feature>
<feature type="region of interest" description="Cytidylyltransferase">
    <location>
        <begin position="345"/>
        <end position="476"/>
    </location>
</feature>
<feature type="active site" evidence="1">
    <location>
        <position position="264"/>
    </location>
</feature>
<feature type="binding site" evidence="1">
    <location>
        <begin position="195"/>
        <end position="198"/>
    </location>
    <ligand>
        <name>ATP</name>
        <dbReference type="ChEBI" id="CHEBI:30616"/>
    </ligand>
</feature>
<evidence type="ECO:0000255" key="1">
    <source>
        <dbReference type="HAMAP-Rule" id="MF_01603"/>
    </source>
</evidence>
<accession>A4Y9Z9</accession>
<proteinExistence type="inferred from homology"/>
<reference key="1">
    <citation type="submission" date="2007-04" db="EMBL/GenBank/DDBJ databases">
        <title>Complete sequence of Shewanella putrefaciens CN-32.</title>
        <authorList>
            <consortium name="US DOE Joint Genome Institute"/>
            <person name="Copeland A."/>
            <person name="Lucas S."/>
            <person name="Lapidus A."/>
            <person name="Barry K."/>
            <person name="Detter J.C."/>
            <person name="Glavina del Rio T."/>
            <person name="Hammon N."/>
            <person name="Israni S."/>
            <person name="Dalin E."/>
            <person name="Tice H."/>
            <person name="Pitluck S."/>
            <person name="Chain P."/>
            <person name="Malfatti S."/>
            <person name="Shin M."/>
            <person name="Vergez L."/>
            <person name="Schmutz J."/>
            <person name="Larimer F."/>
            <person name="Land M."/>
            <person name="Hauser L."/>
            <person name="Kyrpides N."/>
            <person name="Mikhailova N."/>
            <person name="Romine M.F."/>
            <person name="Fredrickson J."/>
            <person name="Tiedje J."/>
            <person name="Richardson P."/>
        </authorList>
    </citation>
    <scope>NUCLEOTIDE SEQUENCE [LARGE SCALE GENOMIC DNA]</scope>
    <source>
        <strain>CN-32 / ATCC BAA-453</strain>
    </source>
</reference>